<name>PYRH_PARDP</name>
<evidence type="ECO:0000255" key="1">
    <source>
        <dbReference type="HAMAP-Rule" id="MF_01220"/>
    </source>
</evidence>
<feature type="chain" id="PRO_0000323912" description="Uridylate kinase">
    <location>
        <begin position="1"/>
        <end position="244"/>
    </location>
</feature>
<feature type="region of interest" description="Involved in allosteric activation by GTP" evidence="1">
    <location>
        <begin position="26"/>
        <end position="31"/>
    </location>
</feature>
<feature type="binding site" evidence="1">
    <location>
        <begin position="18"/>
        <end position="21"/>
    </location>
    <ligand>
        <name>ATP</name>
        <dbReference type="ChEBI" id="CHEBI:30616"/>
    </ligand>
</feature>
<feature type="binding site" evidence="1">
    <location>
        <position position="60"/>
    </location>
    <ligand>
        <name>UMP</name>
        <dbReference type="ChEBI" id="CHEBI:57865"/>
    </ligand>
</feature>
<feature type="binding site" evidence="1">
    <location>
        <position position="61"/>
    </location>
    <ligand>
        <name>ATP</name>
        <dbReference type="ChEBI" id="CHEBI:30616"/>
    </ligand>
</feature>
<feature type="binding site" evidence="1">
    <location>
        <position position="65"/>
    </location>
    <ligand>
        <name>ATP</name>
        <dbReference type="ChEBI" id="CHEBI:30616"/>
    </ligand>
</feature>
<feature type="binding site" evidence="1">
    <location>
        <position position="80"/>
    </location>
    <ligand>
        <name>UMP</name>
        <dbReference type="ChEBI" id="CHEBI:57865"/>
    </ligand>
</feature>
<feature type="binding site" evidence="1">
    <location>
        <begin position="141"/>
        <end position="148"/>
    </location>
    <ligand>
        <name>UMP</name>
        <dbReference type="ChEBI" id="CHEBI:57865"/>
    </ligand>
</feature>
<feature type="binding site" evidence="1">
    <location>
        <position position="168"/>
    </location>
    <ligand>
        <name>ATP</name>
        <dbReference type="ChEBI" id="CHEBI:30616"/>
    </ligand>
</feature>
<feature type="binding site" evidence="1">
    <location>
        <position position="174"/>
    </location>
    <ligand>
        <name>ATP</name>
        <dbReference type="ChEBI" id="CHEBI:30616"/>
    </ligand>
</feature>
<feature type="binding site" evidence="1">
    <location>
        <position position="177"/>
    </location>
    <ligand>
        <name>ATP</name>
        <dbReference type="ChEBI" id="CHEBI:30616"/>
    </ligand>
</feature>
<keyword id="KW-0021">Allosteric enzyme</keyword>
<keyword id="KW-0067">ATP-binding</keyword>
<keyword id="KW-0963">Cytoplasm</keyword>
<keyword id="KW-0418">Kinase</keyword>
<keyword id="KW-0547">Nucleotide-binding</keyword>
<keyword id="KW-0665">Pyrimidine biosynthesis</keyword>
<keyword id="KW-1185">Reference proteome</keyword>
<keyword id="KW-0808">Transferase</keyword>
<protein>
    <recommendedName>
        <fullName evidence="1">Uridylate kinase</fullName>
        <shortName evidence="1">UK</shortName>
        <ecNumber evidence="1">2.7.4.22</ecNumber>
    </recommendedName>
    <alternativeName>
        <fullName evidence="1">Uridine monophosphate kinase</fullName>
        <shortName evidence="1">UMP kinase</shortName>
        <shortName evidence="1">UMPK</shortName>
    </alternativeName>
</protein>
<gene>
    <name evidence="1" type="primary">pyrH</name>
    <name type="ordered locus">Pden_3993</name>
</gene>
<accession>A1B965</accession>
<reference key="1">
    <citation type="submission" date="2006-12" db="EMBL/GenBank/DDBJ databases">
        <title>Complete sequence of chromosome 2 of Paracoccus denitrificans PD1222.</title>
        <authorList>
            <person name="Copeland A."/>
            <person name="Lucas S."/>
            <person name="Lapidus A."/>
            <person name="Barry K."/>
            <person name="Detter J.C."/>
            <person name="Glavina del Rio T."/>
            <person name="Hammon N."/>
            <person name="Israni S."/>
            <person name="Dalin E."/>
            <person name="Tice H."/>
            <person name="Pitluck S."/>
            <person name="Munk A.C."/>
            <person name="Brettin T."/>
            <person name="Bruce D."/>
            <person name="Han C."/>
            <person name="Tapia R."/>
            <person name="Gilna P."/>
            <person name="Schmutz J."/>
            <person name="Larimer F."/>
            <person name="Land M."/>
            <person name="Hauser L."/>
            <person name="Kyrpides N."/>
            <person name="Lykidis A."/>
            <person name="Spiro S."/>
            <person name="Richardson D.J."/>
            <person name="Moir J.W.B."/>
            <person name="Ferguson S.J."/>
            <person name="van Spanning R.J.M."/>
            <person name="Richardson P."/>
        </authorList>
    </citation>
    <scope>NUCLEOTIDE SEQUENCE [LARGE SCALE GENOMIC DNA]</scope>
    <source>
        <strain>Pd 1222</strain>
    </source>
</reference>
<sequence length="244" mass="26479">MSESASKTPGSYSRVMLKISGEALMGDQGYGLHPPTVARIAQEVKSVHDMGIEICMVIGGGNIFRGLQGSAQGMERATADYMGMLATVMNALAMQAALEALKIHTRVISAIRMDEVAEPYIRRRAVRHLEKKRVCIFAAGTGNPYFTTDTAATLRANEMNCEAIFKGTKVDGVYDKDPNKFPDAKRYDDVTYDEVLQKHLGVMDASAIALARDNDLPIIVFSLDEPGGFRGILAGSGTYTRVHG</sequence>
<proteinExistence type="inferred from homology"/>
<dbReference type="EC" id="2.7.4.22" evidence="1"/>
<dbReference type="EMBL" id="CP000490">
    <property type="protein sequence ID" value="ABL72059.1"/>
    <property type="molecule type" value="Genomic_DNA"/>
</dbReference>
<dbReference type="RefSeq" id="WP_011750227.1">
    <property type="nucleotide sequence ID" value="NC_008687.1"/>
</dbReference>
<dbReference type="SMR" id="A1B965"/>
<dbReference type="STRING" id="318586.Pden_3993"/>
<dbReference type="EnsemblBacteria" id="ABL72059">
    <property type="protein sequence ID" value="ABL72059"/>
    <property type="gene ID" value="Pden_3993"/>
</dbReference>
<dbReference type="GeneID" id="93453654"/>
<dbReference type="KEGG" id="pde:Pden_3993"/>
<dbReference type="eggNOG" id="COG0528">
    <property type="taxonomic scope" value="Bacteria"/>
</dbReference>
<dbReference type="HOGENOM" id="CLU_033861_0_0_5"/>
<dbReference type="OrthoDB" id="9807458at2"/>
<dbReference type="UniPathway" id="UPA00159">
    <property type="reaction ID" value="UER00275"/>
</dbReference>
<dbReference type="Proteomes" id="UP000000361">
    <property type="component" value="Chromosome 2"/>
</dbReference>
<dbReference type="GO" id="GO:0005737">
    <property type="term" value="C:cytoplasm"/>
    <property type="evidence" value="ECO:0007669"/>
    <property type="project" value="UniProtKB-SubCell"/>
</dbReference>
<dbReference type="GO" id="GO:0005524">
    <property type="term" value="F:ATP binding"/>
    <property type="evidence" value="ECO:0007669"/>
    <property type="project" value="UniProtKB-KW"/>
</dbReference>
<dbReference type="GO" id="GO:0033862">
    <property type="term" value="F:UMP kinase activity"/>
    <property type="evidence" value="ECO:0007669"/>
    <property type="project" value="UniProtKB-EC"/>
</dbReference>
<dbReference type="GO" id="GO:0044210">
    <property type="term" value="P:'de novo' CTP biosynthetic process"/>
    <property type="evidence" value="ECO:0007669"/>
    <property type="project" value="UniProtKB-UniRule"/>
</dbReference>
<dbReference type="GO" id="GO:0006225">
    <property type="term" value="P:UDP biosynthetic process"/>
    <property type="evidence" value="ECO:0007669"/>
    <property type="project" value="TreeGrafter"/>
</dbReference>
<dbReference type="CDD" id="cd04254">
    <property type="entry name" value="AAK_UMPK-PyrH-Ec"/>
    <property type="match status" value="1"/>
</dbReference>
<dbReference type="FunFam" id="3.40.1160.10:FF:000001">
    <property type="entry name" value="Uridylate kinase"/>
    <property type="match status" value="1"/>
</dbReference>
<dbReference type="Gene3D" id="3.40.1160.10">
    <property type="entry name" value="Acetylglutamate kinase-like"/>
    <property type="match status" value="1"/>
</dbReference>
<dbReference type="HAMAP" id="MF_01220_B">
    <property type="entry name" value="PyrH_B"/>
    <property type="match status" value="1"/>
</dbReference>
<dbReference type="InterPro" id="IPR036393">
    <property type="entry name" value="AceGlu_kinase-like_sf"/>
</dbReference>
<dbReference type="InterPro" id="IPR001048">
    <property type="entry name" value="Asp/Glu/Uridylate_kinase"/>
</dbReference>
<dbReference type="InterPro" id="IPR011817">
    <property type="entry name" value="Uridylate_kinase"/>
</dbReference>
<dbReference type="InterPro" id="IPR015963">
    <property type="entry name" value="Uridylate_kinase_bac"/>
</dbReference>
<dbReference type="NCBIfam" id="TIGR02075">
    <property type="entry name" value="pyrH_bact"/>
    <property type="match status" value="1"/>
</dbReference>
<dbReference type="PANTHER" id="PTHR42833">
    <property type="entry name" value="URIDYLATE KINASE"/>
    <property type="match status" value="1"/>
</dbReference>
<dbReference type="PANTHER" id="PTHR42833:SF4">
    <property type="entry name" value="URIDYLATE KINASE PUMPKIN, CHLOROPLASTIC"/>
    <property type="match status" value="1"/>
</dbReference>
<dbReference type="Pfam" id="PF00696">
    <property type="entry name" value="AA_kinase"/>
    <property type="match status" value="1"/>
</dbReference>
<dbReference type="PIRSF" id="PIRSF005650">
    <property type="entry name" value="Uridylate_kin"/>
    <property type="match status" value="1"/>
</dbReference>
<dbReference type="SUPFAM" id="SSF53633">
    <property type="entry name" value="Carbamate kinase-like"/>
    <property type="match status" value="1"/>
</dbReference>
<comment type="function">
    <text evidence="1">Catalyzes the reversible phosphorylation of UMP to UDP.</text>
</comment>
<comment type="catalytic activity">
    <reaction evidence="1">
        <text>UMP + ATP = UDP + ADP</text>
        <dbReference type="Rhea" id="RHEA:24400"/>
        <dbReference type="ChEBI" id="CHEBI:30616"/>
        <dbReference type="ChEBI" id="CHEBI:57865"/>
        <dbReference type="ChEBI" id="CHEBI:58223"/>
        <dbReference type="ChEBI" id="CHEBI:456216"/>
        <dbReference type="EC" id="2.7.4.22"/>
    </reaction>
</comment>
<comment type="activity regulation">
    <text evidence="1">Allosterically activated by GTP. Inhibited by UTP.</text>
</comment>
<comment type="pathway">
    <text evidence="1">Pyrimidine metabolism; CTP biosynthesis via de novo pathway; UDP from UMP (UMPK route): step 1/1.</text>
</comment>
<comment type="subunit">
    <text evidence="1">Homohexamer.</text>
</comment>
<comment type="subcellular location">
    <subcellularLocation>
        <location evidence="1">Cytoplasm</location>
    </subcellularLocation>
</comment>
<comment type="similarity">
    <text evidence="1">Belongs to the UMP kinase family.</text>
</comment>
<organism>
    <name type="scientific">Paracoccus denitrificans (strain Pd 1222)</name>
    <dbReference type="NCBI Taxonomy" id="318586"/>
    <lineage>
        <taxon>Bacteria</taxon>
        <taxon>Pseudomonadati</taxon>
        <taxon>Pseudomonadota</taxon>
        <taxon>Alphaproteobacteria</taxon>
        <taxon>Rhodobacterales</taxon>
        <taxon>Paracoccaceae</taxon>
        <taxon>Paracoccus</taxon>
    </lineage>
</organism>